<accession>Q6PF15</accession>
<accession>A2RU06</accession>
<accession>F5H412</accession>
<accession>Q86XM7</accession>
<accession>Q8NBB1</accession>
<name>KLH35_HUMAN</name>
<sequence length="583" mass="62892">MRQGHAPEESEPGCEAPCAGPCHAQRVLQALNAYRRSGTLTDVVLRAGGRDFPCHRAALSAGSAYFRSLFAAGRPERGPAVVPVVPVAPEAPGTSPAGAAAALAVVLDYVYGAGVRLRAEDEAAAVLALAERLGVAGLREACVRFLEGRLRAANSLALRRVAAAFSLAPLAERCGRVLRQAFAEVARHADFLELAPDEVVALLADPALGVAREEAVFEAAMRWVRHDAPARRGQLRRLLEHVRLPLLAPAYFLEKVEADELLQACGECRPLLLEARACFILGREAGALRTRPRRFMDLAEVIVVIGGCDRKGLLKLPFADAYHPESQRWTPLPSLPGYTRSEFAACALRNDVYVSGGHINSHDVWMFSSHLHTWIKVASLHKGRWRHKMAVVQGQLFAVGGFDGLRRLHSVERYDPFSNTWAAAAPLPEAVSSAAVASCAGKLFVIGGARQGGVNTDKVQCFDPKEDRWSLRSPAPFSQRCLEAVSLEDTIYVMGGLMSKIFTYDPGTDVWGEAAVLPSPVESCGVTVCDGKVHILGGRDDRGESTDKVFTFDPSSGQVEVQPSLQRCTSSHGCVTIIQSLGR</sequence>
<proteinExistence type="evidence at protein level"/>
<keyword id="KW-0025">Alternative splicing</keyword>
<keyword id="KW-0880">Kelch repeat</keyword>
<keyword id="KW-1185">Reference proteome</keyword>
<keyword id="KW-0677">Repeat</keyword>
<organism>
    <name type="scientific">Homo sapiens</name>
    <name type="common">Human</name>
    <dbReference type="NCBI Taxonomy" id="9606"/>
    <lineage>
        <taxon>Eukaryota</taxon>
        <taxon>Metazoa</taxon>
        <taxon>Chordata</taxon>
        <taxon>Craniata</taxon>
        <taxon>Vertebrata</taxon>
        <taxon>Euteleostomi</taxon>
        <taxon>Mammalia</taxon>
        <taxon>Eutheria</taxon>
        <taxon>Euarchontoglires</taxon>
        <taxon>Primates</taxon>
        <taxon>Haplorrhini</taxon>
        <taxon>Catarrhini</taxon>
        <taxon>Hominidae</taxon>
        <taxon>Homo</taxon>
    </lineage>
</organism>
<gene>
    <name type="primary">KLHL35</name>
</gene>
<reference key="1">
    <citation type="journal article" date="2006" name="Nature">
        <title>Human chromosome 11 DNA sequence and analysis including novel gene identification.</title>
        <authorList>
            <person name="Taylor T.D."/>
            <person name="Noguchi H."/>
            <person name="Totoki Y."/>
            <person name="Toyoda A."/>
            <person name="Kuroki Y."/>
            <person name="Dewar K."/>
            <person name="Lloyd C."/>
            <person name="Itoh T."/>
            <person name="Takeda T."/>
            <person name="Kim D.-W."/>
            <person name="She X."/>
            <person name="Barlow K.F."/>
            <person name="Bloom T."/>
            <person name="Bruford E."/>
            <person name="Chang J.L."/>
            <person name="Cuomo C.A."/>
            <person name="Eichler E."/>
            <person name="FitzGerald M.G."/>
            <person name="Jaffe D.B."/>
            <person name="LaButti K."/>
            <person name="Nicol R."/>
            <person name="Park H.-S."/>
            <person name="Seaman C."/>
            <person name="Sougnez C."/>
            <person name="Yang X."/>
            <person name="Zimmer A.R."/>
            <person name="Zody M.C."/>
            <person name="Birren B.W."/>
            <person name="Nusbaum C."/>
            <person name="Fujiyama A."/>
            <person name="Hattori M."/>
            <person name="Rogers J."/>
            <person name="Lander E.S."/>
            <person name="Sakaki Y."/>
        </authorList>
    </citation>
    <scope>NUCLEOTIDE SEQUENCE [LARGE SCALE GENOMIC DNA]</scope>
</reference>
<reference key="2">
    <citation type="submission" date="2005-07" db="EMBL/GenBank/DDBJ databases">
        <authorList>
            <person name="Mural R.J."/>
            <person name="Istrail S."/>
            <person name="Sutton G.G."/>
            <person name="Florea L."/>
            <person name="Halpern A.L."/>
            <person name="Mobarry C.M."/>
            <person name="Lippert R."/>
            <person name="Walenz B."/>
            <person name="Shatkay H."/>
            <person name="Dew I."/>
            <person name="Miller J.R."/>
            <person name="Flanigan M.J."/>
            <person name="Edwards N.J."/>
            <person name="Bolanos R."/>
            <person name="Fasulo D."/>
            <person name="Halldorsson B.V."/>
            <person name="Hannenhalli S."/>
            <person name="Turner R."/>
            <person name="Yooseph S."/>
            <person name="Lu F."/>
            <person name="Nusskern D.R."/>
            <person name="Shue B.C."/>
            <person name="Zheng X.H."/>
            <person name="Zhong F."/>
            <person name="Delcher A.L."/>
            <person name="Huson D.H."/>
            <person name="Kravitz S.A."/>
            <person name="Mouchard L."/>
            <person name="Reinert K."/>
            <person name="Remington K.A."/>
            <person name="Clark A.G."/>
            <person name="Waterman M.S."/>
            <person name="Eichler E.E."/>
            <person name="Adams M.D."/>
            <person name="Hunkapiller M.W."/>
            <person name="Myers E.W."/>
            <person name="Venter J.C."/>
        </authorList>
    </citation>
    <scope>NUCLEOTIDE SEQUENCE [LARGE SCALE GENOMIC DNA]</scope>
</reference>
<reference key="3">
    <citation type="journal article" date="2004" name="Genome Res.">
        <title>The status, quality, and expansion of the NIH full-length cDNA project: the Mammalian Gene Collection (MGC).</title>
        <authorList>
            <consortium name="The MGC Project Team"/>
        </authorList>
    </citation>
    <scope>NUCLEOTIDE SEQUENCE [LARGE SCALE MRNA] OF 148-583 (ISOFORM 1)</scope>
    <source>
        <tissue>Brain</tissue>
        <tissue>Testis</tissue>
    </source>
</reference>
<reference key="4">
    <citation type="journal article" date="2004" name="Nat. Genet.">
        <title>Complete sequencing and characterization of 21,243 full-length human cDNAs.</title>
        <authorList>
            <person name="Ota T."/>
            <person name="Suzuki Y."/>
            <person name="Nishikawa T."/>
            <person name="Otsuki T."/>
            <person name="Sugiyama T."/>
            <person name="Irie R."/>
            <person name="Wakamatsu A."/>
            <person name="Hayashi K."/>
            <person name="Sato H."/>
            <person name="Nagai K."/>
            <person name="Kimura K."/>
            <person name="Makita H."/>
            <person name="Sekine M."/>
            <person name="Obayashi M."/>
            <person name="Nishi T."/>
            <person name="Shibahara T."/>
            <person name="Tanaka T."/>
            <person name="Ishii S."/>
            <person name="Yamamoto J."/>
            <person name="Saito K."/>
            <person name="Kawai Y."/>
            <person name="Isono Y."/>
            <person name="Nakamura Y."/>
            <person name="Nagahari K."/>
            <person name="Murakami K."/>
            <person name="Yasuda T."/>
            <person name="Iwayanagi T."/>
            <person name="Wagatsuma M."/>
            <person name="Shiratori A."/>
            <person name="Sudo H."/>
            <person name="Hosoiri T."/>
            <person name="Kaku Y."/>
            <person name="Kodaira H."/>
            <person name="Kondo H."/>
            <person name="Sugawara M."/>
            <person name="Takahashi M."/>
            <person name="Kanda K."/>
            <person name="Yokoi T."/>
            <person name="Furuya T."/>
            <person name="Kikkawa E."/>
            <person name="Omura Y."/>
            <person name="Abe K."/>
            <person name="Kamihara K."/>
            <person name="Katsuta N."/>
            <person name="Sato K."/>
            <person name="Tanikawa M."/>
            <person name="Yamazaki M."/>
            <person name="Ninomiya K."/>
            <person name="Ishibashi T."/>
            <person name="Yamashita H."/>
            <person name="Murakawa K."/>
            <person name="Fujimori K."/>
            <person name="Tanai H."/>
            <person name="Kimata M."/>
            <person name="Watanabe M."/>
            <person name="Hiraoka S."/>
            <person name="Chiba Y."/>
            <person name="Ishida S."/>
            <person name="Ono Y."/>
            <person name="Takiguchi S."/>
            <person name="Watanabe S."/>
            <person name="Yosida M."/>
            <person name="Hotuta T."/>
            <person name="Kusano J."/>
            <person name="Kanehori K."/>
            <person name="Takahashi-Fujii A."/>
            <person name="Hara H."/>
            <person name="Tanase T.-O."/>
            <person name="Nomura Y."/>
            <person name="Togiya S."/>
            <person name="Komai F."/>
            <person name="Hara R."/>
            <person name="Takeuchi K."/>
            <person name="Arita M."/>
            <person name="Imose N."/>
            <person name="Musashino K."/>
            <person name="Yuuki H."/>
            <person name="Oshima A."/>
            <person name="Sasaki N."/>
            <person name="Aotsuka S."/>
            <person name="Yoshikawa Y."/>
            <person name="Matsunawa H."/>
            <person name="Ichihara T."/>
            <person name="Shiohata N."/>
            <person name="Sano S."/>
            <person name="Moriya S."/>
            <person name="Momiyama H."/>
            <person name="Satoh N."/>
            <person name="Takami S."/>
            <person name="Terashima Y."/>
            <person name="Suzuki O."/>
            <person name="Nakagawa S."/>
            <person name="Senoh A."/>
            <person name="Mizoguchi H."/>
            <person name="Goto Y."/>
            <person name="Shimizu F."/>
            <person name="Wakebe H."/>
            <person name="Hishigaki H."/>
            <person name="Watanabe T."/>
            <person name="Sugiyama A."/>
            <person name="Takemoto M."/>
            <person name="Kawakami B."/>
            <person name="Yamazaki M."/>
            <person name="Watanabe K."/>
            <person name="Kumagai A."/>
            <person name="Itakura S."/>
            <person name="Fukuzumi Y."/>
            <person name="Fujimori Y."/>
            <person name="Komiyama M."/>
            <person name="Tashiro H."/>
            <person name="Tanigami A."/>
            <person name="Fujiwara T."/>
            <person name="Ono T."/>
            <person name="Yamada K."/>
            <person name="Fujii Y."/>
            <person name="Ozaki K."/>
            <person name="Hirao M."/>
            <person name="Ohmori Y."/>
            <person name="Kawabata A."/>
            <person name="Hikiji T."/>
            <person name="Kobatake N."/>
            <person name="Inagaki H."/>
            <person name="Ikema Y."/>
            <person name="Okamoto S."/>
            <person name="Okitani R."/>
            <person name="Kawakami T."/>
            <person name="Noguchi S."/>
            <person name="Itoh T."/>
            <person name="Shigeta K."/>
            <person name="Senba T."/>
            <person name="Matsumura K."/>
            <person name="Nakajima Y."/>
            <person name="Mizuno T."/>
            <person name="Morinaga M."/>
            <person name="Sasaki M."/>
            <person name="Togashi T."/>
            <person name="Oyama M."/>
            <person name="Hata H."/>
            <person name="Watanabe M."/>
            <person name="Komatsu T."/>
            <person name="Mizushima-Sugano J."/>
            <person name="Satoh T."/>
            <person name="Shirai Y."/>
            <person name="Takahashi Y."/>
            <person name="Nakagawa K."/>
            <person name="Okumura K."/>
            <person name="Nagase T."/>
            <person name="Nomura N."/>
            <person name="Kikuchi H."/>
            <person name="Masuho Y."/>
            <person name="Yamashita R."/>
            <person name="Nakai K."/>
            <person name="Yada T."/>
            <person name="Nakamura Y."/>
            <person name="Ohara O."/>
            <person name="Isogai T."/>
            <person name="Sugano S."/>
        </authorList>
    </citation>
    <scope>NUCLEOTIDE SEQUENCE [LARGE SCALE MRNA] OF 190-583 (ISOFORM 2)</scope>
    <source>
        <tissue>Substantia nigra</tissue>
    </source>
</reference>
<evidence type="ECO:0000255" key="1">
    <source>
        <dbReference type="PROSITE-ProRule" id="PRU00037"/>
    </source>
</evidence>
<evidence type="ECO:0000303" key="2">
    <source>
    </source>
</evidence>
<evidence type="ECO:0000305" key="3"/>
<comment type="interaction">
    <interactant intactId="EBI-9477654">
        <id>Q6PF15</id>
    </interactant>
    <interactant intactId="EBI-3905054">
        <id>P13196</id>
        <label>ALAS1</label>
    </interactant>
    <organismsDiffer>false</organismsDiffer>
    <experiments>4</experiments>
</comment>
<comment type="interaction">
    <interactant intactId="EBI-9477654">
        <id>Q6PF15</id>
    </interactant>
    <interactant intactId="EBI-743771">
        <id>Q92624</id>
        <label>APPBP2</label>
    </interactant>
    <organismsDiffer>false</organismsDiffer>
    <experiments>6</experiments>
</comment>
<comment type="interaction">
    <interactant intactId="EBI-9477654">
        <id>Q6PF15</id>
    </interactant>
    <interactant intactId="EBI-739580">
        <id>Q13137</id>
        <label>CALCOCO2</label>
    </interactant>
    <organismsDiffer>false</organismsDiffer>
    <experiments>3</experiments>
</comment>
<comment type="interaction">
    <interactant intactId="EBI-9477654">
        <id>Q6PF15</id>
    </interactant>
    <interactant intactId="EBI-14240149">
        <id>B3EWG3</id>
        <label>FAM25A</label>
    </interactant>
    <organismsDiffer>false</organismsDiffer>
    <experiments>3</experiments>
</comment>
<comment type="interaction">
    <interactant intactId="EBI-9477654">
        <id>Q6PF15</id>
    </interactant>
    <interactant intactId="EBI-5916454">
        <id>A6NEM1</id>
        <label>GOLGA6L9</label>
    </interactant>
    <organismsDiffer>false</organismsDiffer>
    <experiments>3</experiments>
</comment>
<comment type="interaction">
    <interactant intactId="EBI-9477654">
        <id>Q6PF15</id>
    </interactant>
    <interactant intactId="EBI-713635">
        <id>O43639</id>
        <label>NCK2</label>
    </interactant>
    <organismsDiffer>false</organismsDiffer>
    <experiments>3</experiments>
</comment>
<comment type="interaction">
    <interactant intactId="EBI-9477654">
        <id>Q6PF15</id>
    </interactant>
    <interactant intactId="EBI-12867288">
        <id>Q8WUN7</id>
        <label>UBTD2</label>
    </interactant>
    <organismsDiffer>false</organismsDiffer>
    <experiments>3</experiments>
</comment>
<comment type="alternative products">
    <event type="alternative splicing"/>
    <isoform>
        <id>Q6PF15-1</id>
        <name>1</name>
        <sequence type="displayed"/>
    </isoform>
    <isoform>
        <id>Q6PF15-2</id>
        <name>2</name>
        <sequence type="described" ref="VSP_034783 VSP_034784 VSP_034785"/>
    </isoform>
</comment>
<comment type="sequence caution" evidence="3">
    <conflict type="erroneous initiation">
        <sequence resource="EMBL-CDS" id="AAH42952"/>
    </conflict>
    <text>Truncated N-terminus.</text>
</comment>
<comment type="sequence caution" evidence="3">
    <conflict type="erroneous initiation">
        <sequence resource="EMBL-CDS" id="AAH57763"/>
    </conflict>
    <text>Truncated N-terminus.</text>
</comment>
<comment type="sequence caution" evidence="3">
    <conflict type="erroneous initiation">
        <sequence resource="EMBL-CDS" id="AAI32709"/>
    </conflict>
    <text>Truncated N-terminus.</text>
</comment>
<comment type="sequence caution" evidence="3">
    <conflict type="erroneous initiation">
        <sequence resource="EMBL-CDS" id="AAI32711"/>
    </conflict>
    <text>Truncated N-terminus.</text>
</comment>
<comment type="sequence caution" evidence="3">
    <conflict type="erroneous initiation">
        <sequence resource="EMBL-CDS" id="BAC03585"/>
    </conflict>
    <text>Truncated N-terminus.</text>
</comment>
<comment type="sequence caution" evidence="3">
    <conflict type="erroneous gene model prediction">
        <sequence resource="EMBL-CDS" id="EAW74965"/>
    </conflict>
</comment>
<comment type="sequence caution" evidence="3">
    <conflict type="erroneous gene model prediction">
        <sequence resource="EMBL-CDS" id="EAW74966"/>
    </conflict>
</comment>
<dbReference type="EMBL" id="AP000744">
    <property type="status" value="NOT_ANNOTATED_CDS"/>
    <property type="molecule type" value="Genomic_DNA"/>
</dbReference>
<dbReference type="EMBL" id="CH471076">
    <property type="protein sequence ID" value="EAW74965.1"/>
    <property type="status" value="ALT_SEQ"/>
    <property type="molecule type" value="Genomic_DNA"/>
</dbReference>
<dbReference type="EMBL" id="CH471076">
    <property type="protein sequence ID" value="EAW74966.1"/>
    <property type="status" value="ALT_SEQ"/>
    <property type="molecule type" value="Genomic_DNA"/>
</dbReference>
<dbReference type="EMBL" id="BC042952">
    <property type="protein sequence ID" value="AAH42952.3"/>
    <property type="status" value="ALT_INIT"/>
    <property type="molecule type" value="mRNA"/>
</dbReference>
<dbReference type="EMBL" id="BC057763">
    <property type="protein sequence ID" value="AAH57763.1"/>
    <property type="status" value="ALT_INIT"/>
    <property type="molecule type" value="mRNA"/>
</dbReference>
<dbReference type="EMBL" id="BC132708">
    <property type="protein sequence ID" value="AAI32709.1"/>
    <property type="status" value="ALT_INIT"/>
    <property type="molecule type" value="mRNA"/>
</dbReference>
<dbReference type="EMBL" id="BC132710">
    <property type="protein sequence ID" value="AAI32711.1"/>
    <property type="status" value="ALT_INIT"/>
    <property type="molecule type" value="mRNA"/>
</dbReference>
<dbReference type="EMBL" id="AK091109">
    <property type="protein sequence ID" value="BAC03585.1"/>
    <property type="status" value="ALT_INIT"/>
    <property type="molecule type" value="mRNA"/>
</dbReference>
<dbReference type="CCDS" id="CCDS44685.2">
    <molecule id="Q6PF15-1"/>
</dbReference>
<dbReference type="RefSeq" id="NP_001034637.2">
    <molecule id="Q6PF15-1"/>
    <property type="nucleotide sequence ID" value="NM_001039548.3"/>
</dbReference>
<dbReference type="SMR" id="Q6PF15"/>
<dbReference type="BioGRID" id="129497">
    <property type="interactions" value="11"/>
</dbReference>
<dbReference type="ComplexPortal" id="CPX-8221">
    <property type="entry name" value="CRL3 E3 ubiquitin ligase complex, KLHL35 variant"/>
</dbReference>
<dbReference type="FunCoup" id="Q6PF15">
    <property type="interactions" value="5"/>
</dbReference>
<dbReference type="IntAct" id="Q6PF15">
    <property type="interactions" value="8"/>
</dbReference>
<dbReference type="STRING" id="9606.ENSP00000438526"/>
<dbReference type="GlyGen" id="Q6PF15">
    <property type="glycosylation" value="1 site, 1 O-linked glycan (1 site)"/>
</dbReference>
<dbReference type="iPTMnet" id="Q6PF15"/>
<dbReference type="PhosphoSitePlus" id="Q6PF15"/>
<dbReference type="BioMuta" id="KLHL35"/>
<dbReference type="DMDM" id="205831238"/>
<dbReference type="jPOST" id="Q6PF15"/>
<dbReference type="MassIVE" id="Q6PF15"/>
<dbReference type="PaxDb" id="9606-ENSP00000438526"/>
<dbReference type="PeptideAtlas" id="Q6PF15"/>
<dbReference type="ProteomicsDB" id="26436"/>
<dbReference type="ProteomicsDB" id="67101">
    <molecule id="Q6PF15-1"/>
</dbReference>
<dbReference type="ProteomicsDB" id="67102">
    <molecule id="Q6PF15-2"/>
</dbReference>
<dbReference type="Antibodypedia" id="45083">
    <property type="antibodies" value="111 antibodies from 19 providers"/>
</dbReference>
<dbReference type="DNASU" id="283212"/>
<dbReference type="Ensembl" id="ENST00000539798.3">
    <molecule id="Q6PF15-1"/>
    <property type="protein sequence ID" value="ENSP00000438526.1"/>
    <property type="gene ID" value="ENSG00000149243.17"/>
</dbReference>
<dbReference type="GeneID" id="283212"/>
<dbReference type="KEGG" id="hsa:283212"/>
<dbReference type="MANE-Select" id="ENST00000539798.3">
    <property type="protein sequence ID" value="ENSP00000438526.1"/>
    <property type="RefSeq nucleotide sequence ID" value="NM_001039548.3"/>
    <property type="RefSeq protein sequence ID" value="NP_001034637.2"/>
</dbReference>
<dbReference type="UCSC" id="uc001owm.3">
    <molecule id="Q6PF15-1"/>
    <property type="organism name" value="human"/>
</dbReference>
<dbReference type="AGR" id="HGNC:26597"/>
<dbReference type="CTD" id="283212"/>
<dbReference type="DisGeNET" id="283212"/>
<dbReference type="GeneCards" id="KLHL35"/>
<dbReference type="HGNC" id="HGNC:26597">
    <property type="gene designation" value="KLHL35"/>
</dbReference>
<dbReference type="HPA" id="ENSG00000149243">
    <property type="expression patterns" value="Group enriched (brain, testis)"/>
</dbReference>
<dbReference type="neXtProt" id="NX_Q6PF15"/>
<dbReference type="OpenTargets" id="ENSG00000149243"/>
<dbReference type="PharmGKB" id="PA162393595"/>
<dbReference type="VEuPathDB" id="HostDB:ENSG00000149243"/>
<dbReference type="eggNOG" id="KOG4441">
    <property type="taxonomic scope" value="Eukaryota"/>
</dbReference>
<dbReference type="GeneTree" id="ENSGT00940000161093"/>
<dbReference type="InParanoid" id="Q6PF15"/>
<dbReference type="OMA" id="GCEAPCA"/>
<dbReference type="OrthoDB" id="19132at2759"/>
<dbReference type="PAN-GO" id="Q6PF15">
    <property type="GO annotations" value="0 GO annotations based on evolutionary models"/>
</dbReference>
<dbReference type="PhylomeDB" id="Q6PF15"/>
<dbReference type="TreeFam" id="TF351654"/>
<dbReference type="PathwayCommons" id="Q6PF15"/>
<dbReference type="SignaLink" id="Q6PF15"/>
<dbReference type="BioGRID-ORCS" id="283212">
    <property type="hits" value="19 hits in 1149 CRISPR screens"/>
</dbReference>
<dbReference type="GenomeRNAi" id="283212"/>
<dbReference type="Pharos" id="Q6PF15">
    <property type="development level" value="Tdark"/>
</dbReference>
<dbReference type="PRO" id="PR:Q6PF15"/>
<dbReference type="Proteomes" id="UP000005640">
    <property type="component" value="Chromosome 11"/>
</dbReference>
<dbReference type="RNAct" id="Q6PF15">
    <property type="molecule type" value="protein"/>
</dbReference>
<dbReference type="Bgee" id="ENSG00000149243">
    <property type="expression patterns" value="Expressed in ganglionic eminence and 117 other cell types or tissues"/>
</dbReference>
<dbReference type="ExpressionAtlas" id="Q6PF15">
    <property type="expression patterns" value="baseline and differential"/>
</dbReference>
<dbReference type="GO" id="GO:0031463">
    <property type="term" value="C:Cul3-RING ubiquitin ligase complex"/>
    <property type="evidence" value="ECO:0000318"/>
    <property type="project" value="GO_Central"/>
</dbReference>
<dbReference type="GO" id="GO:0005737">
    <property type="term" value="C:cytoplasm"/>
    <property type="evidence" value="ECO:0000318"/>
    <property type="project" value="GO_Central"/>
</dbReference>
<dbReference type="GO" id="GO:1990756">
    <property type="term" value="F:ubiquitin-like ligase-substrate adaptor activity"/>
    <property type="evidence" value="ECO:0000318"/>
    <property type="project" value="GO_Central"/>
</dbReference>
<dbReference type="GO" id="GO:0043161">
    <property type="term" value="P:proteasome-mediated ubiquitin-dependent protein catabolic process"/>
    <property type="evidence" value="ECO:0000318"/>
    <property type="project" value="GO_Central"/>
</dbReference>
<dbReference type="CDD" id="cd18265">
    <property type="entry name" value="BTB_POZ_KLHL35"/>
    <property type="match status" value="1"/>
</dbReference>
<dbReference type="FunFam" id="1.25.40.420:FF:000001">
    <property type="entry name" value="Kelch-like family member 12"/>
    <property type="match status" value="1"/>
</dbReference>
<dbReference type="Gene3D" id="1.25.40.420">
    <property type="match status" value="1"/>
</dbReference>
<dbReference type="Gene3D" id="2.120.10.80">
    <property type="entry name" value="Kelch-type beta propeller"/>
    <property type="match status" value="1"/>
</dbReference>
<dbReference type="Gene3D" id="3.30.710.10">
    <property type="entry name" value="Potassium Channel Kv1.1, Chain A"/>
    <property type="match status" value="1"/>
</dbReference>
<dbReference type="InterPro" id="IPR011705">
    <property type="entry name" value="BACK"/>
</dbReference>
<dbReference type="InterPro" id="IPR017096">
    <property type="entry name" value="BTB-kelch_protein"/>
</dbReference>
<dbReference type="InterPro" id="IPR000210">
    <property type="entry name" value="BTB/POZ_dom"/>
</dbReference>
<dbReference type="InterPro" id="IPR015915">
    <property type="entry name" value="Kelch-typ_b-propeller"/>
</dbReference>
<dbReference type="InterPro" id="IPR006652">
    <property type="entry name" value="Kelch_1"/>
</dbReference>
<dbReference type="InterPro" id="IPR030601">
    <property type="entry name" value="KLHL35_BTB_POZ_dom"/>
</dbReference>
<dbReference type="InterPro" id="IPR011333">
    <property type="entry name" value="SKP1/BTB/POZ_sf"/>
</dbReference>
<dbReference type="PANTHER" id="PTHR24412">
    <property type="entry name" value="KELCH PROTEIN"/>
    <property type="match status" value="1"/>
</dbReference>
<dbReference type="PANTHER" id="PTHR24412:SF187">
    <property type="entry name" value="KELCH-LIKE PROTEIN 35"/>
    <property type="match status" value="1"/>
</dbReference>
<dbReference type="Pfam" id="PF07707">
    <property type="entry name" value="BACK"/>
    <property type="match status" value="1"/>
</dbReference>
<dbReference type="Pfam" id="PF00651">
    <property type="entry name" value="BTB"/>
    <property type="match status" value="1"/>
</dbReference>
<dbReference type="Pfam" id="PF01344">
    <property type="entry name" value="Kelch_1"/>
    <property type="match status" value="1"/>
</dbReference>
<dbReference type="Pfam" id="PF24681">
    <property type="entry name" value="Kelch_KLHDC2_KLHL20_DRC7"/>
    <property type="match status" value="1"/>
</dbReference>
<dbReference type="PIRSF" id="PIRSF037037">
    <property type="entry name" value="Kelch-like_protein_gigaxonin"/>
    <property type="match status" value="1"/>
</dbReference>
<dbReference type="SMART" id="SM00875">
    <property type="entry name" value="BACK"/>
    <property type="match status" value="1"/>
</dbReference>
<dbReference type="SMART" id="SM00225">
    <property type="entry name" value="BTB"/>
    <property type="match status" value="1"/>
</dbReference>
<dbReference type="SMART" id="SM00612">
    <property type="entry name" value="Kelch"/>
    <property type="match status" value="6"/>
</dbReference>
<dbReference type="SUPFAM" id="SSF117281">
    <property type="entry name" value="Kelch motif"/>
    <property type="match status" value="1"/>
</dbReference>
<dbReference type="SUPFAM" id="SSF54695">
    <property type="entry name" value="POZ domain"/>
    <property type="match status" value="1"/>
</dbReference>
<dbReference type="PROSITE" id="PS50097">
    <property type="entry name" value="BTB"/>
    <property type="match status" value="1"/>
</dbReference>
<feature type="chain" id="PRO_0000344466" description="Kelch-like protein 35">
    <location>
        <begin position="1"/>
        <end position="583"/>
    </location>
</feature>
<feature type="domain" description="BTB" evidence="1">
    <location>
        <begin position="41"/>
        <end position="119"/>
    </location>
</feature>
<feature type="domain" description="BACK">
    <location>
        <begin position="146"/>
        <end position="248"/>
    </location>
</feature>
<feature type="repeat" description="Kelch 1">
    <location>
        <begin position="301"/>
        <end position="350"/>
    </location>
</feature>
<feature type="repeat" description="Kelch 2">
    <location>
        <begin position="352"/>
        <end position="394"/>
    </location>
</feature>
<feature type="repeat" description="Kelch 3">
    <location>
        <begin position="395"/>
        <end position="441"/>
    </location>
</feature>
<feature type="repeat" description="Kelch 4">
    <location>
        <begin position="443"/>
        <end position="489"/>
    </location>
</feature>
<feature type="repeat" description="Kelch 5">
    <location>
        <begin position="490"/>
        <end position="531"/>
    </location>
</feature>
<feature type="repeat" description="Kelch 6">
    <location>
        <begin position="533"/>
        <end position="579"/>
    </location>
</feature>
<feature type="splice variant" id="VSP_034783" description="In isoform 2." evidence="2">
    <original>R</original>
    <variation>RRHWAYPHA</variation>
    <location>
        <position position="293"/>
    </location>
</feature>
<feature type="splice variant" id="VSP_034784" description="In isoform 2." evidence="2">
    <original>LFAVGGFDGLRRLHSVERYDPFSN</original>
    <variation>VGTSCSGCPGTQGTDLWMCWREVL</variation>
    <location>
        <begin position="396"/>
        <end position="419"/>
    </location>
</feature>
<feature type="splice variant" id="VSP_034785" description="In isoform 2." evidence="2">
    <location>
        <begin position="420"/>
        <end position="583"/>
    </location>
</feature>
<protein>
    <recommendedName>
        <fullName>Kelch-like protein 35</fullName>
    </recommendedName>
</protein>